<dbReference type="EC" id="4.2.3.4" evidence="1"/>
<dbReference type="EMBL" id="CP000446">
    <property type="protein sequence ID" value="ABI40760.1"/>
    <property type="molecule type" value="Genomic_DNA"/>
</dbReference>
<dbReference type="RefSeq" id="WP_011624419.1">
    <property type="nucleotide sequence ID" value="NC_008321.1"/>
</dbReference>
<dbReference type="SMR" id="Q0HDV7"/>
<dbReference type="KEGG" id="she:Shewmr4_3697"/>
<dbReference type="HOGENOM" id="CLU_001201_0_2_6"/>
<dbReference type="UniPathway" id="UPA00053">
    <property type="reaction ID" value="UER00085"/>
</dbReference>
<dbReference type="GO" id="GO:0005737">
    <property type="term" value="C:cytoplasm"/>
    <property type="evidence" value="ECO:0007669"/>
    <property type="project" value="UniProtKB-SubCell"/>
</dbReference>
<dbReference type="GO" id="GO:0003856">
    <property type="term" value="F:3-dehydroquinate synthase activity"/>
    <property type="evidence" value="ECO:0007669"/>
    <property type="project" value="UniProtKB-UniRule"/>
</dbReference>
<dbReference type="GO" id="GO:0046872">
    <property type="term" value="F:metal ion binding"/>
    <property type="evidence" value="ECO:0007669"/>
    <property type="project" value="UniProtKB-KW"/>
</dbReference>
<dbReference type="GO" id="GO:0000166">
    <property type="term" value="F:nucleotide binding"/>
    <property type="evidence" value="ECO:0007669"/>
    <property type="project" value="UniProtKB-KW"/>
</dbReference>
<dbReference type="GO" id="GO:0008652">
    <property type="term" value="P:amino acid biosynthetic process"/>
    <property type="evidence" value="ECO:0007669"/>
    <property type="project" value="UniProtKB-KW"/>
</dbReference>
<dbReference type="GO" id="GO:0009073">
    <property type="term" value="P:aromatic amino acid family biosynthetic process"/>
    <property type="evidence" value="ECO:0007669"/>
    <property type="project" value="UniProtKB-KW"/>
</dbReference>
<dbReference type="GO" id="GO:0009423">
    <property type="term" value="P:chorismate biosynthetic process"/>
    <property type="evidence" value="ECO:0007669"/>
    <property type="project" value="UniProtKB-UniRule"/>
</dbReference>
<dbReference type="CDD" id="cd08195">
    <property type="entry name" value="DHQS"/>
    <property type="match status" value="1"/>
</dbReference>
<dbReference type="FunFam" id="1.20.1090.10:FF:000002">
    <property type="entry name" value="3-dehydroquinate synthase"/>
    <property type="match status" value="1"/>
</dbReference>
<dbReference type="FunFam" id="3.40.50.1970:FF:000001">
    <property type="entry name" value="3-dehydroquinate synthase"/>
    <property type="match status" value="1"/>
</dbReference>
<dbReference type="Gene3D" id="3.40.50.1970">
    <property type="match status" value="1"/>
</dbReference>
<dbReference type="Gene3D" id="1.20.1090.10">
    <property type="entry name" value="Dehydroquinate synthase-like - alpha domain"/>
    <property type="match status" value="1"/>
</dbReference>
<dbReference type="HAMAP" id="MF_00110">
    <property type="entry name" value="DHQ_synthase"/>
    <property type="match status" value="1"/>
</dbReference>
<dbReference type="InterPro" id="IPR050071">
    <property type="entry name" value="Dehydroquinate_synthase"/>
</dbReference>
<dbReference type="InterPro" id="IPR016037">
    <property type="entry name" value="DHQ_synth_AroB"/>
</dbReference>
<dbReference type="InterPro" id="IPR030963">
    <property type="entry name" value="DHQ_synth_fam"/>
</dbReference>
<dbReference type="InterPro" id="IPR030960">
    <property type="entry name" value="DHQS/DOIS_N"/>
</dbReference>
<dbReference type="InterPro" id="IPR056179">
    <property type="entry name" value="DHQS_C"/>
</dbReference>
<dbReference type="NCBIfam" id="TIGR01357">
    <property type="entry name" value="aroB"/>
    <property type="match status" value="1"/>
</dbReference>
<dbReference type="PANTHER" id="PTHR43622">
    <property type="entry name" value="3-DEHYDROQUINATE SYNTHASE"/>
    <property type="match status" value="1"/>
</dbReference>
<dbReference type="PANTHER" id="PTHR43622:SF7">
    <property type="entry name" value="3-DEHYDROQUINATE SYNTHASE, CHLOROPLASTIC"/>
    <property type="match status" value="1"/>
</dbReference>
<dbReference type="Pfam" id="PF01761">
    <property type="entry name" value="DHQ_synthase"/>
    <property type="match status" value="1"/>
</dbReference>
<dbReference type="Pfam" id="PF24621">
    <property type="entry name" value="DHQS_C"/>
    <property type="match status" value="1"/>
</dbReference>
<dbReference type="PIRSF" id="PIRSF001455">
    <property type="entry name" value="DHQ_synth"/>
    <property type="match status" value="1"/>
</dbReference>
<dbReference type="SUPFAM" id="SSF56796">
    <property type="entry name" value="Dehydroquinate synthase-like"/>
    <property type="match status" value="1"/>
</dbReference>
<reference key="1">
    <citation type="submission" date="2006-08" db="EMBL/GenBank/DDBJ databases">
        <title>Complete sequence of Shewanella sp. MR-4.</title>
        <authorList>
            <consortium name="US DOE Joint Genome Institute"/>
            <person name="Copeland A."/>
            <person name="Lucas S."/>
            <person name="Lapidus A."/>
            <person name="Barry K."/>
            <person name="Detter J.C."/>
            <person name="Glavina del Rio T."/>
            <person name="Hammon N."/>
            <person name="Israni S."/>
            <person name="Dalin E."/>
            <person name="Tice H."/>
            <person name="Pitluck S."/>
            <person name="Kiss H."/>
            <person name="Brettin T."/>
            <person name="Bruce D."/>
            <person name="Han C."/>
            <person name="Tapia R."/>
            <person name="Gilna P."/>
            <person name="Schmutz J."/>
            <person name="Larimer F."/>
            <person name="Land M."/>
            <person name="Hauser L."/>
            <person name="Kyrpides N."/>
            <person name="Mikhailova N."/>
            <person name="Nealson K."/>
            <person name="Konstantinidis K."/>
            <person name="Klappenbach J."/>
            <person name="Tiedje J."/>
            <person name="Richardson P."/>
        </authorList>
    </citation>
    <scope>NUCLEOTIDE SEQUENCE [LARGE SCALE GENOMIC DNA]</scope>
    <source>
        <strain>MR-4</strain>
    </source>
</reference>
<feature type="chain" id="PRO_1000094617" description="3-dehydroquinate synthase">
    <location>
        <begin position="1"/>
        <end position="359"/>
    </location>
</feature>
<feature type="binding site" evidence="1">
    <location>
        <begin position="71"/>
        <end position="76"/>
    </location>
    <ligand>
        <name>NAD(+)</name>
        <dbReference type="ChEBI" id="CHEBI:57540"/>
    </ligand>
</feature>
<feature type="binding site" evidence="1">
    <location>
        <begin position="105"/>
        <end position="109"/>
    </location>
    <ligand>
        <name>NAD(+)</name>
        <dbReference type="ChEBI" id="CHEBI:57540"/>
    </ligand>
</feature>
<feature type="binding site" evidence="1">
    <location>
        <begin position="129"/>
        <end position="130"/>
    </location>
    <ligand>
        <name>NAD(+)</name>
        <dbReference type="ChEBI" id="CHEBI:57540"/>
    </ligand>
</feature>
<feature type="binding site" evidence="1">
    <location>
        <position position="142"/>
    </location>
    <ligand>
        <name>NAD(+)</name>
        <dbReference type="ChEBI" id="CHEBI:57540"/>
    </ligand>
</feature>
<feature type="binding site" evidence="1">
    <location>
        <position position="151"/>
    </location>
    <ligand>
        <name>NAD(+)</name>
        <dbReference type="ChEBI" id="CHEBI:57540"/>
    </ligand>
</feature>
<feature type="binding site" evidence="1">
    <location>
        <begin position="169"/>
        <end position="172"/>
    </location>
    <ligand>
        <name>NAD(+)</name>
        <dbReference type="ChEBI" id="CHEBI:57540"/>
    </ligand>
</feature>
<feature type="binding site" evidence="1">
    <location>
        <position position="184"/>
    </location>
    <ligand>
        <name>Zn(2+)</name>
        <dbReference type="ChEBI" id="CHEBI:29105"/>
    </ligand>
</feature>
<feature type="binding site" evidence="1">
    <location>
        <position position="247"/>
    </location>
    <ligand>
        <name>Zn(2+)</name>
        <dbReference type="ChEBI" id="CHEBI:29105"/>
    </ligand>
</feature>
<feature type="binding site" evidence="1">
    <location>
        <position position="264"/>
    </location>
    <ligand>
        <name>Zn(2+)</name>
        <dbReference type="ChEBI" id="CHEBI:29105"/>
    </ligand>
</feature>
<comment type="function">
    <text evidence="1">Catalyzes the conversion of 3-deoxy-D-arabino-heptulosonate 7-phosphate (DAHP) to dehydroquinate (DHQ).</text>
</comment>
<comment type="catalytic activity">
    <reaction evidence="1">
        <text>7-phospho-2-dehydro-3-deoxy-D-arabino-heptonate = 3-dehydroquinate + phosphate</text>
        <dbReference type="Rhea" id="RHEA:21968"/>
        <dbReference type="ChEBI" id="CHEBI:32364"/>
        <dbReference type="ChEBI" id="CHEBI:43474"/>
        <dbReference type="ChEBI" id="CHEBI:58394"/>
        <dbReference type="EC" id="4.2.3.4"/>
    </reaction>
</comment>
<comment type="cofactor">
    <cofactor evidence="1">
        <name>Co(2+)</name>
        <dbReference type="ChEBI" id="CHEBI:48828"/>
    </cofactor>
    <cofactor evidence="1">
        <name>Zn(2+)</name>
        <dbReference type="ChEBI" id="CHEBI:29105"/>
    </cofactor>
    <text evidence="1">Binds 1 divalent metal cation per subunit. Can use either Co(2+) or Zn(2+).</text>
</comment>
<comment type="cofactor">
    <cofactor evidence="1">
        <name>NAD(+)</name>
        <dbReference type="ChEBI" id="CHEBI:57540"/>
    </cofactor>
</comment>
<comment type="pathway">
    <text evidence="1">Metabolic intermediate biosynthesis; chorismate biosynthesis; chorismate from D-erythrose 4-phosphate and phosphoenolpyruvate: step 2/7.</text>
</comment>
<comment type="subcellular location">
    <subcellularLocation>
        <location evidence="1">Cytoplasm</location>
    </subcellularLocation>
</comment>
<comment type="similarity">
    <text evidence="1">Belongs to the sugar phosphate cyclases superfamily. Dehydroquinate synthase family.</text>
</comment>
<sequence>MTQQIQVDLGERSYPIYIGQSLMSDSETLSRYLLKKRILIVTNETVAPLYLKQIQDTMASFGEVSSVILPDGEQFKDLTHLDSIFTALLQRNYARDSVLVALGGGVIGDMTGFAAACYQRGVDFIQIPTTLLSQVDSSVGGKTAVNHPLGKNMIGAFYQPQIVIIDTECLQTLPAREFAAGMAEVIKYGIMWDAEFFQWLENNVQALKSLDTQALVYAISRCCEIKADVVSQDETEQGVRALLNLGHTFGHAIEAEMGYGNWLHGEAVAAGTVLAAQTAKSMGLIDESIVRRIVQLFHAFDLPITAPESMDFDSFIKHMRRDKKVLGGQIRLVLPTAIGRADVFSQVPESTLEQVICCA</sequence>
<evidence type="ECO:0000255" key="1">
    <source>
        <dbReference type="HAMAP-Rule" id="MF_00110"/>
    </source>
</evidence>
<protein>
    <recommendedName>
        <fullName evidence="1">3-dehydroquinate synthase</fullName>
        <shortName evidence="1">DHQS</shortName>
        <ecNumber evidence="1">4.2.3.4</ecNumber>
    </recommendedName>
</protein>
<name>AROB_SHESM</name>
<proteinExistence type="inferred from homology"/>
<keyword id="KW-0028">Amino-acid biosynthesis</keyword>
<keyword id="KW-0057">Aromatic amino acid biosynthesis</keyword>
<keyword id="KW-0170">Cobalt</keyword>
<keyword id="KW-0963">Cytoplasm</keyword>
<keyword id="KW-0456">Lyase</keyword>
<keyword id="KW-0479">Metal-binding</keyword>
<keyword id="KW-0520">NAD</keyword>
<keyword id="KW-0547">Nucleotide-binding</keyword>
<keyword id="KW-0862">Zinc</keyword>
<accession>Q0HDV7</accession>
<gene>
    <name evidence="1" type="primary">aroB</name>
    <name type="ordered locus">Shewmr4_3697</name>
</gene>
<organism>
    <name type="scientific">Shewanella sp. (strain MR-4)</name>
    <dbReference type="NCBI Taxonomy" id="60480"/>
    <lineage>
        <taxon>Bacteria</taxon>
        <taxon>Pseudomonadati</taxon>
        <taxon>Pseudomonadota</taxon>
        <taxon>Gammaproteobacteria</taxon>
        <taxon>Alteromonadales</taxon>
        <taxon>Shewanellaceae</taxon>
        <taxon>Shewanella</taxon>
    </lineage>
</organism>